<sequence>MCEGPSRISGPIPPDPTLCPDYYRRPSSAQGRLEGNALKLDLLTPDTDRDLDATPPRAPRIRPGGLEILERGRRGVGGVLLQLGGISLGPGASPKRKDPKDHEKENMRRIREIQRRFREQEHSREQGQSRPLKALWRSPKYDKVESRVKAQLQEPGPASGTEPAHFLRAHSRCGPGLPPPRVPSPQLTLPGPSAKAPGPGVDFITHNARTAKRAPRRHSRSLQVLAQVLEQQQQAQEHYNATQKGHVPQYLLERRDLWRREAEARQHSQPDPAMPPGHTRMPENQRLETLSSLLQSQSQLLRELVLLPAGADSLRAQSHRAELDRKLVQVEEAIKIFSRPKVFVKMDS</sequence>
<reference key="1">
    <citation type="submission" date="2005-08" db="EMBL/GenBank/DDBJ databases">
        <authorList>
            <consortium name="NIH - Mammalian Gene Collection (MGC) project"/>
        </authorList>
    </citation>
    <scope>NUCLEOTIDE SEQUENCE [LARGE SCALE MRNA]</scope>
    <source>
        <strain>Crossbred X Angus</strain>
        <tissue>Liver</tissue>
    </source>
</reference>
<evidence type="ECO:0000250" key="1">
    <source>
        <dbReference type="UniProtKB" id="Q7TSV9"/>
    </source>
</evidence>
<evidence type="ECO:0000250" key="2">
    <source>
        <dbReference type="UniProtKB" id="Q9H0I2"/>
    </source>
</evidence>
<evidence type="ECO:0000255" key="3">
    <source>
        <dbReference type="PROSITE-ProRule" id="PRU01000"/>
    </source>
</evidence>
<evidence type="ECO:0000256" key="4">
    <source>
        <dbReference type="SAM" id="MobiDB-lite"/>
    </source>
</evidence>
<keyword id="KW-0966">Cell projection</keyword>
<keyword id="KW-0970">Cilium biogenesis/degradation</keyword>
<keyword id="KW-0963">Cytoplasm</keyword>
<keyword id="KW-0206">Cytoskeleton</keyword>
<keyword id="KW-0493">Microtubule</keyword>
<keyword id="KW-0597">Phosphoprotein</keyword>
<keyword id="KW-1185">Reference proteome</keyword>
<name>ENKD1_BOVIN</name>
<comment type="function">
    <text evidence="1 2">Microtubule-binding protein which regulates microtubule organization and stability (By similarity). Promotes the stability of astral microtubules and facilitates the proper orientation of the mitotic spindle (By similarity). This allows the oriented division of basal keratinocytes and contributes to epidermal stratification (By similarity). Required for the assembly of both primary and motile cilia (By similarity). Destabilizes the interaction between CCP110 and CEP97 by competing with CEP97 for binding to CCP110 which promotes the removal of CCP110 and CEP97 from the mother centriole and allows the initiation of ciliogenesis (By similarity).</text>
</comment>
<comment type="subunit">
    <text evidence="1 2">Interacts with alpha-tubulin (By similarity). Interacts (via central region) with CCP110 (via N-terminal region); competes with CEP97 for binding to CCP110 (By similarity).</text>
</comment>
<comment type="subcellular location">
    <subcellularLocation>
        <location evidence="2">Cytoplasm</location>
        <location evidence="2">Cytoskeleton</location>
        <location evidence="2">Microtubule organizing center</location>
        <location evidence="2">Centrosome</location>
    </subcellularLocation>
    <subcellularLocation>
        <location evidence="2">Cytoplasm</location>
        <location evidence="2">Cytoskeleton</location>
        <location evidence="2">Microtubule organizing center</location>
        <location evidence="2">Centrosome</location>
        <location evidence="2">Centriole</location>
    </subcellularLocation>
    <subcellularLocation>
        <location evidence="2">Cytoplasm</location>
        <location evidence="2">Cytoskeleton</location>
        <location evidence="2">Cilium basal body</location>
    </subcellularLocation>
    <subcellularLocation>
        <location evidence="2">Cell projection</location>
        <location evidence="2">Cilium</location>
    </subcellularLocation>
    <subcellularLocation>
        <location evidence="2">Cytoplasm</location>
        <location evidence="2">Cytoskeleton</location>
        <location evidence="2">Spindle</location>
    </subcellularLocation>
    <subcellularLocation>
        <location evidence="2">Cytoplasm</location>
        <location evidence="2">Cytoskeleton</location>
        <location evidence="2">Spindle pole</location>
    </subcellularLocation>
    <subcellularLocation>
        <location evidence="2">Cytoplasm</location>
        <location evidence="2">Cytoskeleton</location>
        <location evidence="2">Cilium axoneme</location>
    </subcellularLocation>
    <text evidence="2">Localized at the centrosome and accumulates at the parental centrioles during centriole duplication in cycling cells (By similarity). In ciliated cells, detected at the basal body of the cilium (By similarity).</text>
</comment>
<gene>
    <name type="primary">ENKD1</name>
</gene>
<organism>
    <name type="scientific">Bos taurus</name>
    <name type="common">Bovine</name>
    <dbReference type="NCBI Taxonomy" id="9913"/>
    <lineage>
        <taxon>Eukaryota</taxon>
        <taxon>Metazoa</taxon>
        <taxon>Chordata</taxon>
        <taxon>Craniata</taxon>
        <taxon>Vertebrata</taxon>
        <taxon>Euteleostomi</taxon>
        <taxon>Mammalia</taxon>
        <taxon>Eutheria</taxon>
        <taxon>Laurasiatheria</taxon>
        <taxon>Artiodactyla</taxon>
        <taxon>Ruminantia</taxon>
        <taxon>Pecora</taxon>
        <taxon>Bovidae</taxon>
        <taxon>Bovinae</taxon>
        <taxon>Bos</taxon>
    </lineage>
</organism>
<protein>
    <recommendedName>
        <fullName>Enkurin domain-containing protein 1</fullName>
    </recommendedName>
</protein>
<dbReference type="EMBL" id="BC102534">
    <property type="protein sequence ID" value="AAI02535.1"/>
    <property type="molecule type" value="mRNA"/>
</dbReference>
<dbReference type="RefSeq" id="NP_001030427.1">
    <property type="nucleotide sequence ID" value="NM_001035350.2"/>
</dbReference>
<dbReference type="RefSeq" id="XP_005218664.2">
    <property type="nucleotide sequence ID" value="XM_005218607.5"/>
</dbReference>
<dbReference type="SMR" id="Q3T078"/>
<dbReference type="FunCoup" id="Q3T078">
    <property type="interactions" value="1247"/>
</dbReference>
<dbReference type="STRING" id="9913.ENSBTAP00000025160"/>
<dbReference type="PaxDb" id="9913-ENSBTAP00000025160"/>
<dbReference type="Ensembl" id="ENSBTAT00000025160.5">
    <property type="protein sequence ID" value="ENSBTAP00000025160.5"/>
    <property type="gene ID" value="ENSBTAG00000018904.6"/>
</dbReference>
<dbReference type="GeneID" id="524652"/>
<dbReference type="KEGG" id="bta:524652"/>
<dbReference type="CTD" id="84080"/>
<dbReference type="VEuPathDB" id="HostDB:ENSBTAG00000018904"/>
<dbReference type="VGNC" id="VGNC:28495">
    <property type="gene designation" value="ENKD1"/>
</dbReference>
<dbReference type="eggNOG" id="ENOG502QU1P">
    <property type="taxonomic scope" value="Eukaryota"/>
</dbReference>
<dbReference type="GeneTree" id="ENSGT00940000153866"/>
<dbReference type="InParanoid" id="Q3T078"/>
<dbReference type="OMA" id="DHWRKEA"/>
<dbReference type="OrthoDB" id="10264920at2759"/>
<dbReference type="Proteomes" id="UP000009136">
    <property type="component" value="Chromosome 18"/>
</dbReference>
<dbReference type="Bgee" id="ENSBTAG00000018904">
    <property type="expression patterns" value="Expressed in retina and 102 other cell types or tissues"/>
</dbReference>
<dbReference type="GO" id="GO:0005814">
    <property type="term" value="C:centriole"/>
    <property type="evidence" value="ECO:0000250"/>
    <property type="project" value="UniProtKB"/>
</dbReference>
<dbReference type="GO" id="GO:0005813">
    <property type="term" value="C:centrosome"/>
    <property type="evidence" value="ECO:0000250"/>
    <property type="project" value="UniProtKB"/>
</dbReference>
<dbReference type="GO" id="GO:0036064">
    <property type="term" value="C:ciliary basal body"/>
    <property type="evidence" value="ECO:0000250"/>
    <property type="project" value="UniProtKB"/>
</dbReference>
<dbReference type="GO" id="GO:0005881">
    <property type="term" value="C:cytoplasmic microtubule"/>
    <property type="evidence" value="ECO:0000250"/>
    <property type="project" value="UniProtKB"/>
</dbReference>
<dbReference type="GO" id="GO:0000922">
    <property type="term" value="C:spindle pole"/>
    <property type="evidence" value="ECO:0007669"/>
    <property type="project" value="UniProtKB-SubCell"/>
</dbReference>
<dbReference type="GO" id="GO:0043014">
    <property type="term" value="F:alpha-tubulin binding"/>
    <property type="evidence" value="ECO:0000250"/>
    <property type="project" value="UniProtKB"/>
</dbReference>
<dbReference type="GO" id="GO:0008017">
    <property type="term" value="F:microtubule binding"/>
    <property type="evidence" value="ECO:0000250"/>
    <property type="project" value="UniProtKB"/>
</dbReference>
<dbReference type="GO" id="GO:0000132">
    <property type="term" value="P:establishment of mitotic spindle orientation"/>
    <property type="evidence" value="ECO:0000250"/>
    <property type="project" value="UniProtKB"/>
</dbReference>
<dbReference type="GO" id="GO:0044458">
    <property type="term" value="P:motile cilium assembly"/>
    <property type="evidence" value="ECO:0000250"/>
    <property type="project" value="UniProtKB"/>
</dbReference>
<dbReference type="GO" id="GO:1905515">
    <property type="term" value="P:non-motile cilium assembly"/>
    <property type="evidence" value="ECO:0000250"/>
    <property type="project" value="UniProtKB"/>
</dbReference>
<dbReference type="InterPro" id="IPR027012">
    <property type="entry name" value="Enkurin_dom"/>
</dbReference>
<dbReference type="InterPro" id="IPR052102">
    <property type="entry name" value="Enkurin_domain-protein"/>
</dbReference>
<dbReference type="PANTHER" id="PTHR21490:SF2">
    <property type="entry name" value="ENKURIN DOMAIN-CONTAINING PROTEIN 1"/>
    <property type="match status" value="1"/>
</dbReference>
<dbReference type="PANTHER" id="PTHR21490">
    <property type="entry name" value="ENKURIN-RELATED"/>
    <property type="match status" value="1"/>
</dbReference>
<dbReference type="Pfam" id="PF13864">
    <property type="entry name" value="Enkurin"/>
    <property type="match status" value="1"/>
</dbReference>
<dbReference type="PROSITE" id="PS51665">
    <property type="entry name" value="ENKURIN"/>
    <property type="match status" value="1"/>
</dbReference>
<accession>Q3T078</accession>
<feature type="chain" id="PRO_0000265930" description="Enkurin domain-containing protein 1">
    <location>
        <begin position="1"/>
        <end position="348"/>
    </location>
</feature>
<feature type="domain" description="Enkurin" evidence="3">
    <location>
        <begin position="253"/>
        <end position="345"/>
    </location>
</feature>
<feature type="region of interest" description="Disordered" evidence="4">
    <location>
        <begin position="1"/>
        <end position="65"/>
    </location>
</feature>
<feature type="region of interest" description="Disordered" evidence="4">
    <location>
        <begin position="84"/>
        <end position="195"/>
    </location>
</feature>
<feature type="region of interest" description="Disordered" evidence="4">
    <location>
        <begin position="262"/>
        <end position="282"/>
    </location>
</feature>
<feature type="compositionally biased region" description="Basic and acidic residues" evidence="4">
    <location>
        <begin position="95"/>
        <end position="127"/>
    </location>
</feature>
<feature type="compositionally biased region" description="Basic and acidic residues" evidence="4">
    <location>
        <begin position="139"/>
        <end position="148"/>
    </location>
</feature>
<feature type="modified residue" description="Phosphoserine" evidence="2">
    <location>
        <position position="93"/>
    </location>
</feature>
<feature type="modified residue" description="Phosphoserine" evidence="2">
    <location>
        <position position="138"/>
    </location>
</feature>
<proteinExistence type="evidence at transcript level"/>